<organism>
    <name type="scientific">Arabidopsis thaliana</name>
    <name type="common">Mouse-ear cress</name>
    <dbReference type="NCBI Taxonomy" id="3702"/>
    <lineage>
        <taxon>Eukaryota</taxon>
        <taxon>Viridiplantae</taxon>
        <taxon>Streptophyta</taxon>
        <taxon>Embryophyta</taxon>
        <taxon>Tracheophyta</taxon>
        <taxon>Spermatophyta</taxon>
        <taxon>Magnoliopsida</taxon>
        <taxon>eudicotyledons</taxon>
        <taxon>Gunneridae</taxon>
        <taxon>Pentapetalae</taxon>
        <taxon>rosids</taxon>
        <taxon>malvids</taxon>
        <taxon>Brassicales</taxon>
        <taxon>Brassicaceae</taxon>
        <taxon>Camelineae</taxon>
        <taxon>Arabidopsis</taxon>
    </lineage>
</organism>
<keyword id="KW-0067">ATP-binding</keyword>
<keyword id="KW-0238">DNA-binding</keyword>
<keyword id="KW-0347">Helicase</keyword>
<keyword id="KW-0378">Hydrolase</keyword>
<keyword id="KW-0547">Nucleotide-binding</keyword>
<keyword id="KW-0539">Nucleus</keyword>
<keyword id="KW-1185">Reference proteome</keyword>
<keyword id="KW-0677">Repeat</keyword>
<keyword id="KW-0694">RNA-binding</keyword>
<sequence>MAKKKKDTKHTRLCEATGAWATKVLEDFRASGNDSYVFEQQLTNSERGIIHQMCRTMGLRSKSNGSGEERRLSLFKGDGISKSDKRRMYEARNQKEKEGDGISKSYSKHRYETRFQKAGGIRKTRISPKKLKCVSFPPEAKAVLHDLFTRYPPCDGDTTGTSLGIYTTGNVNSNWKDDFFKKPHMTKHDIENNVVSLSSRLKKERHFREIFEARSKLPIASFRDAIISAVESNQVVLIAGETGCGKTTQVPQYLLDHMWHSKKEACKIICTQPRRISAISVSDRISWERGETIGRTVGYKVRLQSEGGRESSVVFCTNGILLRVLIGKGVNSSVPDITHIIVDEIHERDSYSDFMLMILRDLLPSNPHLRLILMSATLDAERFSEYFGGCPVVRVPGFTYPVRTFFLDDALSVLNSDKNSHLLSAVKRDFKDEDKVSLDEAIDLAWTNDEFDCLVDLVSSEGSHEAYNYQNSTTGLTPLMVFAGKGRVSDVCKLLSVGADCTLKSKEGITALELAEKENQFETAQIIREHAGNIQSNSQQAQDLLDKYMATIKPEEVDVGLIVKLMKKICSDSKDGAILVFLPGWEEISKTKEKLLDDRFFAHSAKFIILCLHSRVPAEEQKKVFNRPPRGCRKIVLATNIAESAVTIDDVVYVIDSGRMKEKSYDPYNDVSTLQSSWVSKANAKQRAGRAGRCQAGICYHLYSKLRAASLPEYRVPEVMRMPVDELCLQVKMLDPNCNVNDFLQKLMDPPVAQSIENALIILKDIGALTPEEELTELGQKFGQLPVHPRISKMIYFAILVNCLDPALILACAADEKDPFTMPLSPGDRKKAAAAKHELASLYGDHSDHLATVAAFQCWKNAKASGQAKEFCSKYFISQVVMKRLDDLCRKLQGELNRHGVIPSSSSNCSLNAHDPGILRAVIAVGLYPMLGRMCPLSKNRTRSVIETIAGAKVRVPSLSNNVDMSSTKFDEALIVFDEITRGDWGVVIRSCTVLPTIPVLLFSREIAVSTTESYDAVKSDDEEDHKVGNVGDAMDIDKEVGRPGEKIMLGPENSVKVVVDRWLPFKVTAFEIAQMYILRERLMASILFKVKHPKENLPPHLGASMYAIASVLSYDSLAQSSVQTVAVQPITSVVDATSPRDDIPSTNPNELREHDPNTTPMGSKLELANKLGLGNMEESLPSNFADGNEQPDPNTSPVEDVSAATKQKKMQSESKRCKSLNNVDLGNIEENFGNMEENPPSDLAIGNEQTLPKLASNLDMGNMEENTPSDLANGNEKTEPNSANSMDLGNMEENTPSDLANGNKKKEPKSVSKLDLGSEKVSIPSNLVNGNEQHDLNIAPGEDASAAKQPEKKRSRSKKRKSGNNLDLGKMEKSKPSDLANENEQTEPKSANNLDLGNMKENTPSDLANENEQTELRLPNNSDYGNMEESLPLNLANGDEQPDPTTAPMEAAKQPKKKRSRSKKCKSVNNLDLGNMEENKPSDLANGNEQKDPESVNRLDPGKEKESIPSNLVSGNEQPDSNTAPAKKPKKKKRKLANNFDSVNNMEEKMPSTNVLSQGNKSGLIEEKPSIPSDQ</sequence>
<feature type="chain" id="PRO_0000435292" description="DExH-box ATP-dependent RNA helicase DExH2">
    <location>
        <begin position="1"/>
        <end position="1576"/>
    </location>
</feature>
<feature type="domain" description="R3H" evidence="1">
    <location>
        <begin position="15"/>
        <end position="78"/>
    </location>
</feature>
<feature type="domain" description="Helicase ATP-binding" evidence="2">
    <location>
        <begin position="227"/>
        <end position="396"/>
    </location>
</feature>
<feature type="domain" description="Helicase C-terminal" evidence="3">
    <location>
        <begin position="561"/>
        <end position="735"/>
    </location>
</feature>
<feature type="region of interest" description="Disordered" evidence="4">
    <location>
        <begin position="1137"/>
        <end position="1165"/>
    </location>
</feature>
<feature type="region of interest" description="Disordered" evidence="4">
    <location>
        <begin position="1177"/>
        <end position="1223"/>
    </location>
</feature>
<feature type="region of interest" description="Disordered" evidence="4">
    <location>
        <begin position="1260"/>
        <end position="1576"/>
    </location>
</feature>
<feature type="short sequence motif" description="DEIH box" evidence="7">
    <location>
        <begin position="343"/>
        <end position="346"/>
    </location>
</feature>
<feature type="short sequence motif" description="PH1" evidence="6">
    <location>
        <begin position="1349"/>
        <end position="1360"/>
    </location>
</feature>
<feature type="short sequence motif" description="PH2" evidence="6">
    <location>
        <begin position="1454"/>
        <end position="1465"/>
    </location>
</feature>
<feature type="short sequence motif" description="Nuclear localization signal" evidence="6">
    <location>
        <begin position="1530"/>
        <end position="1537"/>
    </location>
</feature>
<feature type="compositionally biased region" description="Polar residues" evidence="4">
    <location>
        <begin position="1281"/>
        <end position="1301"/>
    </location>
</feature>
<feature type="compositionally biased region" description="Basic and acidic residues" evidence="4">
    <location>
        <begin position="1305"/>
        <end position="1319"/>
    </location>
</feature>
<feature type="compositionally biased region" description="Basic residues" evidence="4">
    <location>
        <begin position="1352"/>
        <end position="1363"/>
    </location>
</feature>
<feature type="compositionally biased region" description="Polar residues" evidence="4">
    <location>
        <begin position="1381"/>
        <end position="1412"/>
    </location>
</feature>
<feature type="compositionally biased region" description="Basic residues" evidence="4">
    <location>
        <begin position="1455"/>
        <end position="1467"/>
    </location>
</feature>
<feature type="compositionally biased region" description="Basic and acidic residues" evidence="4">
    <location>
        <begin position="1490"/>
        <end position="1508"/>
    </location>
</feature>
<feature type="compositionally biased region" description="Polar residues" evidence="4">
    <location>
        <begin position="1509"/>
        <end position="1524"/>
    </location>
</feature>
<feature type="compositionally biased region" description="Basic residues" evidence="4">
    <location>
        <begin position="1528"/>
        <end position="1537"/>
    </location>
</feature>
<feature type="compositionally biased region" description="Polar residues" evidence="4">
    <location>
        <begin position="1540"/>
        <end position="1562"/>
    </location>
</feature>
<feature type="binding site" evidence="2">
    <location>
        <begin position="240"/>
        <end position="247"/>
    </location>
    <ligand>
        <name>ATP</name>
        <dbReference type="ChEBI" id="CHEBI:30616"/>
    </ligand>
</feature>
<dbReference type="EC" id="3.6.4.13" evidence="7"/>
<dbReference type="EC" id="3.6.4.12" evidence="7"/>
<dbReference type="EMBL" id="D84225">
    <property type="protein sequence ID" value="BAA84364.1"/>
    <property type="status" value="ALT_FRAME"/>
    <property type="molecule type" value="mRNA"/>
</dbReference>
<dbReference type="EMBL" id="AC007592">
    <property type="protein sequence ID" value="AAF24828.1"/>
    <property type="status" value="ALT_SEQ"/>
    <property type="molecule type" value="Genomic_DNA"/>
</dbReference>
<dbReference type="EMBL" id="CP002684">
    <property type="protein sequence ID" value="AEE28021.1"/>
    <property type="molecule type" value="Genomic_DNA"/>
</dbReference>
<dbReference type="PIR" id="E86201">
    <property type="entry name" value="E86201"/>
</dbReference>
<dbReference type="RefSeq" id="NP_172152.1">
    <property type="nucleotide sequence ID" value="NM_100544.3"/>
</dbReference>
<dbReference type="SMR" id="F4IDQ6"/>
<dbReference type="FunCoup" id="F4IDQ6">
    <property type="interactions" value="2518"/>
</dbReference>
<dbReference type="STRING" id="3702.F4IDQ6"/>
<dbReference type="iPTMnet" id="F4IDQ6"/>
<dbReference type="PaxDb" id="3702-AT1G06670.1"/>
<dbReference type="ProteomicsDB" id="251061"/>
<dbReference type="EnsemblPlants" id="AT1G06670.1">
    <property type="protein sequence ID" value="AT1G06670.1"/>
    <property type="gene ID" value="AT1G06670"/>
</dbReference>
<dbReference type="GeneID" id="837177"/>
<dbReference type="Gramene" id="AT1G06670.1">
    <property type="protein sequence ID" value="AT1G06670.1"/>
    <property type="gene ID" value="AT1G06670"/>
</dbReference>
<dbReference type="KEGG" id="ath:AT1G06670"/>
<dbReference type="Araport" id="AT1G06670"/>
<dbReference type="TAIR" id="AT1G06670">
    <property type="gene designation" value="NIH"/>
</dbReference>
<dbReference type="eggNOG" id="KOG0920">
    <property type="taxonomic scope" value="Eukaryota"/>
</dbReference>
<dbReference type="HOGENOM" id="CLU_001832_1_6_1"/>
<dbReference type="InParanoid" id="F4IDQ6"/>
<dbReference type="CD-CODE" id="4299E36E">
    <property type="entry name" value="Nucleolus"/>
</dbReference>
<dbReference type="PRO" id="PR:F4IDQ6"/>
<dbReference type="Proteomes" id="UP000006548">
    <property type="component" value="Chromosome 1"/>
</dbReference>
<dbReference type="ExpressionAtlas" id="F4IDQ6">
    <property type="expression patterns" value="baseline and differential"/>
</dbReference>
<dbReference type="GO" id="GO:0005634">
    <property type="term" value="C:nucleus"/>
    <property type="evidence" value="ECO:0000314"/>
    <property type="project" value="TAIR"/>
</dbReference>
<dbReference type="GO" id="GO:0005524">
    <property type="term" value="F:ATP binding"/>
    <property type="evidence" value="ECO:0007669"/>
    <property type="project" value="UniProtKB-KW"/>
</dbReference>
<dbReference type="GO" id="GO:0016887">
    <property type="term" value="F:ATP hydrolysis activity"/>
    <property type="evidence" value="ECO:0007669"/>
    <property type="project" value="RHEA"/>
</dbReference>
<dbReference type="GO" id="GO:0003677">
    <property type="term" value="F:DNA binding"/>
    <property type="evidence" value="ECO:0000314"/>
    <property type="project" value="TAIR"/>
</dbReference>
<dbReference type="GO" id="GO:0003678">
    <property type="term" value="F:DNA helicase activity"/>
    <property type="evidence" value="ECO:0000250"/>
    <property type="project" value="TAIR"/>
</dbReference>
<dbReference type="GO" id="GO:0003723">
    <property type="term" value="F:RNA binding"/>
    <property type="evidence" value="ECO:0007669"/>
    <property type="project" value="UniProtKB-KW"/>
</dbReference>
<dbReference type="GO" id="GO:0003724">
    <property type="term" value="F:RNA helicase activity"/>
    <property type="evidence" value="ECO:0007669"/>
    <property type="project" value="UniProtKB-EC"/>
</dbReference>
<dbReference type="GO" id="GO:0006259">
    <property type="term" value="P:DNA metabolic process"/>
    <property type="evidence" value="ECO:0000250"/>
    <property type="project" value="TAIR"/>
</dbReference>
<dbReference type="CDD" id="cd17917">
    <property type="entry name" value="DEXHc_RHA-like"/>
    <property type="match status" value="1"/>
</dbReference>
<dbReference type="CDD" id="cd06007">
    <property type="entry name" value="R3H_DEXH_helicase"/>
    <property type="match status" value="1"/>
</dbReference>
<dbReference type="CDD" id="cd18791">
    <property type="entry name" value="SF2_C_RHA"/>
    <property type="match status" value="1"/>
</dbReference>
<dbReference type="FunFam" id="3.40.50.300:FF:000526">
    <property type="entry name" value="DExH-box ATP-dependent RNA helicase DExH3"/>
    <property type="match status" value="1"/>
</dbReference>
<dbReference type="FunFam" id="1.20.120.1080:FF:000011">
    <property type="entry name" value="DExH-box ATP-dependent RNA helicase DExH6"/>
    <property type="match status" value="1"/>
</dbReference>
<dbReference type="FunFam" id="1.25.40.20:FF:000232">
    <property type="entry name" value="DExH-box ATP-dependent RNA helicase DExH6"/>
    <property type="match status" value="1"/>
</dbReference>
<dbReference type="FunFam" id="3.40.50.300:FF:000860">
    <property type="entry name" value="DExH-box ATP-dependent RNA helicase DExH6"/>
    <property type="match status" value="1"/>
</dbReference>
<dbReference type="FunFam" id="3.30.1370.50:FF:000002">
    <property type="entry name" value="Immunoglobulin mu DNA-binding protein 2"/>
    <property type="match status" value="1"/>
</dbReference>
<dbReference type="Gene3D" id="1.20.120.1080">
    <property type="match status" value="1"/>
</dbReference>
<dbReference type="Gene3D" id="1.25.40.20">
    <property type="entry name" value="Ankyrin repeat-containing domain"/>
    <property type="match status" value="1"/>
</dbReference>
<dbReference type="Gene3D" id="3.40.50.300">
    <property type="entry name" value="P-loop containing nucleotide triphosphate hydrolases"/>
    <property type="match status" value="2"/>
</dbReference>
<dbReference type="Gene3D" id="3.30.1370.50">
    <property type="entry name" value="R3H-like domain"/>
    <property type="match status" value="1"/>
</dbReference>
<dbReference type="InterPro" id="IPR036770">
    <property type="entry name" value="Ankyrin_rpt-contain_sf"/>
</dbReference>
<dbReference type="InterPro" id="IPR011709">
    <property type="entry name" value="DEAD-box_helicase_OB_fold"/>
</dbReference>
<dbReference type="InterPro" id="IPR011545">
    <property type="entry name" value="DEAD/DEAH_box_helicase_dom"/>
</dbReference>
<dbReference type="InterPro" id="IPR048333">
    <property type="entry name" value="HA2_WH"/>
</dbReference>
<dbReference type="InterPro" id="IPR007502">
    <property type="entry name" value="Helicase-assoc_dom"/>
</dbReference>
<dbReference type="InterPro" id="IPR014001">
    <property type="entry name" value="Helicase_ATP-bd"/>
</dbReference>
<dbReference type="InterPro" id="IPR001650">
    <property type="entry name" value="Helicase_C-like"/>
</dbReference>
<dbReference type="InterPro" id="IPR027417">
    <property type="entry name" value="P-loop_NTPase"/>
</dbReference>
<dbReference type="InterPro" id="IPR034083">
    <property type="entry name" value="R3H_DEXH_helicase"/>
</dbReference>
<dbReference type="InterPro" id="IPR001374">
    <property type="entry name" value="R3H_dom"/>
</dbReference>
<dbReference type="InterPro" id="IPR036867">
    <property type="entry name" value="R3H_dom_sf"/>
</dbReference>
<dbReference type="PANTHER" id="PTHR18934">
    <property type="entry name" value="ATP-DEPENDENT RNA HELICASE"/>
    <property type="match status" value="1"/>
</dbReference>
<dbReference type="PANTHER" id="PTHR18934:SF227">
    <property type="entry name" value="DEXH-BOX ATP-DEPENDENT RNA HELICASE DEXH2"/>
    <property type="match status" value="1"/>
</dbReference>
<dbReference type="Pfam" id="PF00270">
    <property type="entry name" value="DEAD"/>
    <property type="match status" value="1"/>
</dbReference>
<dbReference type="Pfam" id="PF21010">
    <property type="entry name" value="HA2_C"/>
    <property type="match status" value="1"/>
</dbReference>
<dbReference type="Pfam" id="PF04408">
    <property type="entry name" value="HA2_N"/>
    <property type="match status" value="1"/>
</dbReference>
<dbReference type="Pfam" id="PF00271">
    <property type="entry name" value="Helicase_C"/>
    <property type="match status" value="1"/>
</dbReference>
<dbReference type="Pfam" id="PF07717">
    <property type="entry name" value="OB_NTP_bind"/>
    <property type="match status" value="1"/>
</dbReference>
<dbReference type="Pfam" id="PF01424">
    <property type="entry name" value="R3H"/>
    <property type="match status" value="1"/>
</dbReference>
<dbReference type="SMART" id="SM00487">
    <property type="entry name" value="DEXDc"/>
    <property type="match status" value="1"/>
</dbReference>
<dbReference type="SMART" id="SM00847">
    <property type="entry name" value="HA2"/>
    <property type="match status" value="1"/>
</dbReference>
<dbReference type="SMART" id="SM00490">
    <property type="entry name" value="HELICc"/>
    <property type="match status" value="1"/>
</dbReference>
<dbReference type="SMART" id="SM00393">
    <property type="entry name" value="R3H"/>
    <property type="match status" value="1"/>
</dbReference>
<dbReference type="SUPFAM" id="SSF48403">
    <property type="entry name" value="Ankyrin repeat"/>
    <property type="match status" value="1"/>
</dbReference>
<dbReference type="SUPFAM" id="SSF52540">
    <property type="entry name" value="P-loop containing nucleoside triphosphate hydrolases"/>
    <property type="match status" value="2"/>
</dbReference>
<dbReference type="SUPFAM" id="SSF82708">
    <property type="entry name" value="R3H domain"/>
    <property type="match status" value="1"/>
</dbReference>
<dbReference type="PROSITE" id="PS51192">
    <property type="entry name" value="HELICASE_ATP_BIND_1"/>
    <property type="match status" value="1"/>
</dbReference>
<dbReference type="PROSITE" id="PS51194">
    <property type="entry name" value="HELICASE_CTER"/>
    <property type="match status" value="1"/>
</dbReference>
<dbReference type="PROSITE" id="PS51061">
    <property type="entry name" value="R3H"/>
    <property type="match status" value="1"/>
</dbReference>
<gene>
    <name evidence="10" type="primary">NIH</name>
    <name evidence="8" type="ordered locus">At1g06670</name>
    <name evidence="9" type="ORF">F12K11.4</name>
</gene>
<proteinExistence type="evidence at protein level"/>
<protein>
    <recommendedName>
        <fullName evidence="7">DExH-box ATP-dependent RNA helicase DExH2</fullName>
        <ecNumber evidence="7">3.6.4.13</ecNumber>
    </recommendedName>
    <alternativeName>
        <fullName evidence="10">DEIH-box RNA/DNA helicase</fullName>
        <ecNumber evidence="7">3.6.4.12</ecNumber>
    </alternativeName>
</protein>
<reference key="1">
    <citation type="journal article" date="1999" name="Nucleic Acids Res.">
        <title>An Arabidopsis cDNA encoding a DNA-binding protein that is highly similar to the DEAH family of RNA/DNA helicase genes.</title>
        <authorList>
            <person name="Isono K."/>
            <person name="Yamamoto H."/>
            <person name="Satoh K."/>
            <person name="Kobayashi H."/>
        </authorList>
    </citation>
    <scope>NUCLEOTIDE SEQUENCE [MRNA]</scope>
    <scope>MOTIF</scope>
    <scope>SUBCELLULAR LOCATION</scope>
    <scope>FUNCTION</scope>
    <scope>SUBUNIT</scope>
    <source>
        <strain evidence="10">cv. Columbia</strain>
        <tissue evidence="10">Root</tissue>
    </source>
</reference>
<reference key="2">
    <citation type="journal article" date="2000" name="Nature">
        <title>Sequence and analysis of chromosome 1 of the plant Arabidopsis thaliana.</title>
        <authorList>
            <person name="Theologis A."/>
            <person name="Ecker J.R."/>
            <person name="Palm C.J."/>
            <person name="Federspiel N.A."/>
            <person name="Kaul S."/>
            <person name="White O."/>
            <person name="Alonso J."/>
            <person name="Altafi H."/>
            <person name="Araujo R."/>
            <person name="Bowman C.L."/>
            <person name="Brooks S.Y."/>
            <person name="Buehler E."/>
            <person name="Chan A."/>
            <person name="Chao Q."/>
            <person name="Chen H."/>
            <person name="Cheuk R.F."/>
            <person name="Chin C.W."/>
            <person name="Chung M.K."/>
            <person name="Conn L."/>
            <person name="Conway A.B."/>
            <person name="Conway A.R."/>
            <person name="Creasy T.H."/>
            <person name="Dewar K."/>
            <person name="Dunn P."/>
            <person name="Etgu P."/>
            <person name="Feldblyum T.V."/>
            <person name="Feng J.-D."/>
            <person name="Fong B."/>
            <person name="Fujii C.Y."/>
            <person name="Gill J.E."/>
            <person name="Goldsmith A.D."/>
            <person name="Haas B."/>
            <person name="Hansen N.F."/>
            <person name="Hughes B."/>
            <person name="Huizar L."/>
            <person name="Hunter J.L."/>
            <person name="Jenkins J."/>
            <person name="Johnson-Hopson C."/>
            <person name="Khan S."/>
            <person name="Khaykin E."/>
            <person name="Kim C.J."/>
            <person name="Koo H.L."/>
            <person name="Kremenetskaia I."/>
            <person name="Kurtz D.B."/>
            <person name="Kwan A."/>
            <person name="Lam B."/>
            <person name="Langin-Hooper S."/>
            <person name="Lee A."/>
            <person name="Lee J.M."/>
            <person name="Lenz C.A."/>
            <person name="Li J.H."/>
            <person name="Li Y.-P."/>
            <person name="Lin X."/>
            <person name="Liu S.X."/>
            <person name="Liu Z.A."/>
            <person name="Luros J.S."/>
            <person name="Maiti R."/>
            <person name="Marziali A."/>
            <person name="Militscher J."/>
            <person name="Miranda M."/>
            <person name="Nguyen M."/>
            <person name="Nierman W.C."/>
            <person name="Osborne B.I."/>
            <person name="Pai G."/>
            <person name="Peterson J."/>
            <person name="Pham P.K."/>
            <person name="Rizzo M."/>
            <person name="Rooney T."/>
            <person name="Rowley D."/>
            <person name="Sakano H."/>
            <person name="Salzberg S.L."/>
            <person name="Schwartz J.R."/>
            <person name="Shinn P."/>
            <person name="Southwick A.M."/>
            <person name="Sun H."/>
            <person name="Tallon L.J."/>
            <person name="Tambunga G."/>
            <person name="Toriumi M.J."/>
            <person name="Town C.D."/>
            <person name="Utterback T."/>
            <person name="Van Aken S."/>
            <person name="Vaysberg M."/>
            <person name="Vysotskaia V.S."/>
            <person name="Walker M."/>
            <person name="Wu D."/>
            <person name="Yu G."/>
            <person name="Fraser C.M."/>
            <person name="Venter J.C."/>
            <person name="Davis R.W."/>
        </authorList>
    </citation>
    <scope>NUCLEOTIDE SEQUENCE [LARGE SCALE GENOMIC DNA]</scope>
    <source>
        <strain>cv. Columbia</strain>
    </source>
</reference>
<reference key="3">
    <citation type="journal article" date="2017" name="Plant J.">
        <title>Araport11: a complete reannotation of the Arabidopsis thaliana reference genome.</title>
        <authorList>
            <person name="Cheng C.Y."/>
            <person name="Krishnakumar V."/>
            <person name="Chan A.P."/>
            <person name="Thibaud-Nissen F."/>
            <person name="Schobel S."/>
            <person name="Town C.D."/>
        </authorList>
    </citation>
    <scope>GENOME REANNOTATION</scope>
    <source>
        <strain>cv. Columbia</strain>
    </source>
</reference>
<reference key="4">
    <citation type="journal article" date="2013" name="PLoS ONE">
        <title>Genome-wide comparative in silico analysis of the RNA helicase gene family in Zea mays and Glycine max: a comparison with Arabidopsis and Oryza sativa.</title>
        <authorList>
            <person name="Xu R."/>
            <person name="Zhang S."/>
            <person name="Huang J."/>
            <person name="Zheng C."/>
        </authorList>
    </citation>
    <scope>GENE FAMILY</scope>
</reference>
<comment type="function">
    <text evidence="5">May function as an ATP-dependent RNA/DNA helicase. Binds DNA in vitro in a non-specific manner.</text>
</comment>
<comment type="catalytic activity">
    <reaction evidence="7">
        <text>ATP + H2O = ADP + phosphate + H(+)</text>
        <dbReference type="Rhea" id="RHEA:13065"/>
        <dbReference type="ChEBI" id="CHEBI:15377"/>
        <dbReference type="ChEBI" id="CHEBI:15378"/>
        <dbReference type="ChEBI" id="CHEBI:30616"/>
        <dbReference type="ChEBI" id="CHEBI:43474"/>
        <dbReference type="ChEBI" id="CHEBI:456216"/>
        <dbReference type="EC" id="3.6.4.13"/>
    </reaction>
</comment>
<comment type="catalytic activity">
    <reaction evidence="7">
        <text>ATP + H2O = ADP + phosphate + H(+)</text>
        <dbReference type="Rhea" id="RHEA:13065"/>
        <dbReference type="ChEBI" id="CHEBI:15377"/>
        <dbReference type="ChEBI" id="CHEBI:15378"/>
        <dbReference type="ChEBI" id="CHEBI:30616"/>
        <dbReference type="ChEBI" id="CHEBI:43474"/>
        <dbReference type="ChEBI" id="CHEBI:456216"/>
        <dbReference type="EC" id="3.6.4.12"/>
    </reaction>
</comment>
<comment type="subunit">
    <text evidence="6">Homodimer.</text>
</comment>
<comment type="subcellular location">
    <subcellularLocation>
        <location evidence="5">Nucleus</location>
    </subcellularLocation>
</comment>
<comment type="domain">
    <text evidence="6">PH (probe helix) motif serves as a DNA recognition helix.</text>
</comment>
<comment type="similarity">
    <text evidence="7">Belongs to the DExH box helicase family.</text>
</comment>
<comment type="sequence caution" evidence="7">
    <conflict type="erroneous gene model prediction">
        <sequence resource="EMBL-CDS" id="AAF24828"/>
    </conflict>
</comment>
<comment type="sequence caution" evidence="7">
    <conflict type="frameshift">
        <sequence resource="EMBL-CDS" id="BAA84364"/>
    </conflict>
</comment>
<accession>F4IDQ6</accession>
<accession>Q9SHK6</accession>
<accession>Q9SMG9</accession>
<evidence type="ECO:0000255" key="1">
    <source>
        <dbReference type="PROSITE-ProRule" id="PRU00382"/>
    </source>
</evidence>
<evidence type="ECO:0000255" key="2">
    <source>
        <dbReference type="PROSITE-ProRule" id="PRU00541"/>
    </source>
</evidence>
<evidence type="ECO:0000255" key="3">
    <source>
        <dbReference type="PROSITE-ProRule" id="PRU00542"/>
    </source>
</evidence>
<evidence type="ECO:0000256" key="4">
    <source>
        <dbReference type="SAM" id="MobiDB-lite"/>
    </source>
</evidence>
<evidence type="ECO:0000269" key="5">
    <source>
    </source>
</evidence>
<evidence type="ECO:0000303" key="6">
    <source>
    </source>
</evidence>
<evidence type="ECO:0000305" key="7"/>
<evidence type="ECO:0000312" key="8">
    <source>
        <dbReference type="Araport" id="AT1G06670"/>
    </source>
</evidence>
<evidence type="ECO:0000312" key="9">
    <source>
        <dbReference type="EMBL" id="AAF24828.1"/>
    </source>
</evidence>
<evidence type="ECO:0000312" key="10">
    <source>
        <dbReference type="EMBL" id="BAA84364.1"/>
    </source>
</evidence>
<name>NIH_ARATH</name>